<reference key="1">
    <citation type="journal article" date="2006" name="Genes Genet. Syst.">
        <title>Complete nucleotide sequence of the cotton (Gossypium barbadense L.) chloroplast genome with a comparative analysis of sequences among 9 dicot plants.</title>
        <authorList>
            <person name="Ibrahim R.I.H."/>
            <person name="Azuma J."/>
            <person name="Sakamoto M."/>
        </authorList>
    </citation>
    <scope>NUCLEOTIDE SEQUENCE [LARGE SCALE GENOMIC DNA]</scope>
</reference>
<comment type="function">
    <text evidence="1">DNA-dependent RNA polymerase catalyzes the transcription of DNA into RNA using the four ribonucleoside triphosphates as substrates.</text>
</comment>
<comment type="catalytic activity">
    <reaction>
        <text>RNA(n) + a ribonucleoside 5'-triphosphate = RNA(n+1) + diphosphate</text>
        <dbReference type="Rhea" id="RHEA:21248"/>
        <dbReference type="Rhea" id="RHEA-COMP:14527"/>
        <dbReference type="Rhea" id="RHEA-COMP:17342"/>
        <dbReference type="ChEBI" id="CHEBI:33019"/>
        <dbReference type="ChEBI" id="CHEBI:61557"/>
        <dbReference type="ChEBI" id="CHEBI:140395"/>
        <dbReference type="EC" id="2.7.7.6"/>
    </reaction>
</comment>
<comment type="subunit">
    <text evidence="1">In plastids the minimal PEP RNA polymerase catalytic core is composed of four subunits: alpha, beta, beta', and beta''. When a (nuclear-encoded) sigma factor is associated with the core the holoenzyme is formed, which can initiate transcription (By similarity).</text>
</comment>
<comment type="subcellular location">
    <subcellularLocation>
        <location>Plastid</location>
        <location>Chloroplast</location>
    </subcellularLocation>
</comment>
<comment type="domain">
    <text evidence="1">The N-terminal domain is essential for RNAP assembly and basal transcription, whereas the C-terminal domain is involved in interaction with transcriptional regulators and with upstream promoter elements.</text>
</comment>
<comment type="similarity">
    <text evidence="2">Belongs to the RNA polymerase alpha chain family.</text>
</comment>
<comment type="sequence caution" evidence="2">
    <conflict type="frameshift">
        <sequence resource="EMBL-CDS" id="BAF41279"/>
    </conflict>
</comment>
<organism>
    <name type="scientific">Gossypium barbadense</name>
    <name type="common">Sea Island cotton</name>
    <name type="synonym">Hibiscus barbadensis</name>
    <dbReference type="NCBI Taxonomy" id="3634"/>
    <lineage>
        <taxon>Eukaryota</taxon>
        <taxon>Viridiplantae</taxon>
        <taxon>Streptophyta</taxon>
        <taxon>Embryophyta</taxon>
        <taxon>Tracheophyta</taxon>
        <taxon>Spermatophyta</taxon>
        <taxon>Magnoliopsida</taxon>
        <taxon>eudicotyledons</taxon>
        <taxon>Gunneridae</taxon>
        <taxon>Pentapetalae</taxon>
        <taxon>rosids</taxon>
        <taxon>malvids</taxon>
        <taxon>Malvales</taxon>
        <taxon>Malvaceae</taxon>
        <taxon>Malvoideae</taxon>
        <taxon>Gossypium</taxon>
    </lineage>
</organism>
<feature type="chain" id="PRO_0000296892" description="DNA-directed RNA polymerase subunit alpha">
    <location>
        <begin position="1"/>
        <end position="330"/>
    </location>
</feature>
<feature type="region of interest" description="Alpha N-terminal domain (alpha-NTD)" evidence="1">
    <location>
        <begin position="1"/>
        <end position="235"/>
    </location>
</feature>
<feature type="region of interest" description="Alpha C-terminal domain (alpha-CTD)" evidence="1">
    <location>
        <begin position="270"/>
        <end position="330"/>
    </location>
</feature>
<evidence type="ECO:0000250" key="1"/>
<evidence type="ECO:0000305" key="2"/>
<gene>
    <name type="primary">rpoA</name>
</gene>
<proteinExistence type="inferred from homology"/>
<geneLocation type="chloroplast"/>
<sequence>MVREKVKVSTSTRTRQWKCVESRTDSKRLYYGRFILSPLMKGQADTIGIAMRRALLGELEGTCITRAKSEKIPHEYSTIVGIQESVHEILMNLKEIVLRGNLYGTRNAFICAKGPGYVTAQDIILPPSVEIVDNTQHVASLTEPIDLCIGLQIERNRGYGIKTPKNFHDGSYPIDAVFMPVRNANHSIHCYGNDNEKQEILFLEIWTNGSLTPKEALHEASRNLIDLFIHFLHAKEENLHLENNQHDVTLHFFFPFHYRLVKLTKKKKEIALKYIFIDQSELPPRIYNCLKKSNIHTLLDLLNNSREDLMKMEHFRIEDVKQILGILEKK</sequence>
<protein>
    <recommendedName>
        <fullName>DNA-directed RNA polymerase subunit alpha</fullName>
        <shortName>PEP</shortName>
        <ecNumber>2.7.7.6</ecNumber>
    </recommendedName>
    <alternativeName>
        <fullName>Plastid-encoded RNA polymerase subunit alpha</fullName>
        <shortName>RNA polymerase subunit alpha</shortName>
    </alternativeName>
</protein>
<dbReference type="EC" id="2.7.7.6"/>
<dbReference type="EMBL" id="AP009123">
    <property type="protein sequence ID" value="BAF41279.1"/>
    <property type="status" value="ALT_FRAME"/>
    <property type="molecule type" value="Genomic_DNA"/>
</dbReference>
<dbReference type="RefSeq" id="YP_913219.1">
    <property type="nucleotide sequence ID" value="NC_008641.1"/>
</dbReference>
<dbReference type="SMR" id="A0ZZ67"/>
<dbReference type="GeneID" id="4575244"/>
<dbReference type="GO" id="GO:0009507">
    <property type="term" value="C:chloroplast"/>
    <property type="evidence" value="ECO:0007669"/>
    <property type="project" value="UniProtKB-SubCell"/>
</dbReference>
<dbReference type="GO" id="GO:0000428">
    <property type="term" value="C:DNA-directed RNA polymerase complex"/>
    <property type="evidence" value="ECO:0007669"/>
    <property type="project" value="UniProtKB-KW"/>
</dbReference>
<dbReference type="GO" id="GO:0005739">
    <property type="term" value="C:mitochondrion"/>
    <property type="evidence" value="ECO:0007669"/>
    <property type="project" value="GOC"/>
</dbReference>
<dbReference type="GO" id="GO:0003677">
    <property type="term" value="F:DNA binding"/>
    <property type="evidence" value="ECO:0007669"/>
    <property type="project" value="UniProtKB-UniRule"/>
</dbReference>
<dbReference type="GO" id="GO:0003899">
    <property type="term" value="F:DNA-directed RNA polymerase activity"/>
    <property type="evidence" value="ECO:0007669"/>
    <property type="project" value="UniProtKB-UniRule"/>
</dbReference>
<dbReference type="GO" id="GO:0046983">
    <property type="term" value="F:protein dimerization activity"/>
    <property type="evidence" value="ECO:0007669"/>
    <property type="project" value="InterPro"/>
</dbReference>
<dbReference type="GO" id="GO:0006351">
    <property type="term" value="P:DNA-templated transcription"/>
    <property type="evidence" value="ECO:0007669"/>
    <property type="project" value="UniProtKB-UniRule"/>
</dbReference>
<dbReference type="CDD" id="cd06928">
    <property type="entry name" value="RNAP_alpha_NTD"/>
    <property type="match status" value="1"/>
</dbReference>
<dbReference type="FunFam" id="1.10.150.20:FF:000021">
    <property type="entry name" value="DNA-directed RNA polymerase subunit alpha"/>
    <property type="match status" value="1"/>
</dbReference>
<dbReference type="FunFam" id="2.170.120.12:FF:000001">
    <property type="entry name" value="DNA-directed RNA polymerase subunit alpha"/>
    <property type="match status" value="1"/>
</dbReference>
<dbReference type="FunFam" id="3.30.1360.10:FF:000039">
    <property type="entry name" value="DNA-directed RNA polymerase subunit alpha"/>
    <property type="match status" value="1"/>
</dbReference>
<dbReference type="Gene3D" id="1.10.150.20">
    <property type="entry name" value="5' to 3' exonuclease, C-terminal subdomain"/>
    <property type="match status" value="1"/>
</dbReference>
<dbReference type="Gene3D" id="2.170.120.12">
    <property type="entry name" value="DNA-directed RNA polymerase, insert domain"/>
    <property type="match status" value="1"/>
</dbReference>
<dbReference type="Gene3D" id="3.30.1360.10">
    <property type="entry name" value="RNA polymerase, RBP11-like subunit"/>
    <property type="match status" value="1"/>
</dbReference>
<dbReference type="HAMAP" id="MF_00059">
    <property type="entry name" value="RNApol_bact_RpoA"/>
    <property type="match status" value="1"/>
</dbReference>
<dbReference type="InterPro" id="IPR011262">
    <property type="entry name" value="DNA-dir_RNA_pol_insert"/>
</dbReference>
<dbReference type="InterPro" id="IPR011263">
    <property type="entry name" value="DNA-dir_RNA_pol_RpoA/D/Rpb3"/>
</dbReference>
<dbReference type="InterPro" id="IPR011773">
    <property type="entry name" value="DNA-dir_RpoA"/>
</dbReference>
<dbReference type="InterPro" id="IPR036603">
    <property type="entry name" value="RBP11-like"/>
</dbReference>
<dbReference type="InterPro" id="IPR011260">
    <property type="entry name" value="RNAP_asu_C"/>
</dbReference>
<dbReference type="InterPro" id="IPR036643">
    <property type="entry name" value="RNApol_insert_sf"/>
</dbReference>
<dbReference type="NCBIfam" id="TIGR02027">
    <property type="entry name" value="rpoA"/>
    <property type="match status" value="1"/>
</dbReference>
<dbReference type="Pfam" id="PF01000">
    <property type="entry name" value="RNA_pol_A_bac"/>
    <property type="match status" value="1"/>
</dbReference>
<dbReference type="Pfam" id="PF03118">
    <property type="entry name" value="RNA_pol_A_CTD"/>
    <property type="match status" value="1"/>
</dbReference>
<dbReference type="Pfam" id="PF01193">
    <property type="entry name" value="RNA_pol_L"/>
    <property type="match status" value="1"/>
</dbReference>
<dbReference type="SMART" id="SM00662">
    <property type="entry name" value="RPOLD"/>
    <property type="match status" value="1"/>
</dbReference>
<dbReference type="SUPFAM" id="SSF47789">
    <property type="entry name" value="C-terminal domain of RNA polymerase alpha subunit"/>
    <property type="match status" value="1"/>
</dbReference>
<dbReference type="SUPFAM" id="SSF56553">
    <property type="entry name" value="Insert subdomain of RNA polymerase alpha subunit"/>
    <property type="match status" value="1"/>
</dbReference>
<dbReference type="SUPFAM" id="SSF55257">
    <property type="entry name" value="RBP11-like subunits of RNA polymerase"/>
    <property type="match status" value="1"/>
</dbReference>
<accession>A0ZZ67</accession>
<keyword id="KW-0150">Chloroplast</keyword>
<keyword id="KW-0240">DNA-directed RNA polymerase</keyword>
<keyword id="KW-0548">Nucleotidyltransferase</keyword>
<keyword id="KW-0934">Plastid</keyword>
<keyword id="KW-0804">Transcription</keyword>
<keyword id="KW-0808">Transferase</keyword>
<name>RPOA_GOSBA</name>